<name>IPAD_SHIFL</name>
<reference key="1">
    <citation type="journal article" date="1988" name="Proc. Natl. Acad. Sci. U.S.A.">
        <title>Characterization of invasion plasmid antigen genes (ipaBCD) from Shigella flexneri.</title>
        <authorList>
            <person name="Venkatesan M.M."/>
            <person name="Buysse J.M."/>
            <person name="Kopecko D.J."/>
        </authorList>
    </citation>
    <scope>NUCLEOTIDE SEQUENCE [GENOMIC DNA]</scope>
    <source>
        <strain>M90T / Serotype 5a</strain>
        <plasmid>pWR100</plasmid>
    </source>
</reference>
<reference key="2">
    <citation type="journal article" date="1989" name="Mol. Microbiol.">
        <title>Functional organization and nucleotide sequence of virulence region-2 on the large virulence plasmid in Shigella flexneri 2a.</title>
        <authorList>
            <person name="Sasakawa C."/>
            <person name="Adler B."/>
            <person name="Tobe T."/>
            <person name="Okada N."/>
            <person name="Nagai S."/>
            <person name="Komatsu K."/>
            <person name="Yoshikawa M."/>
        </authorList>
    </citation>
    <scope>NUCLEOTIDE SEQUENCE [GENOMIC DNA]</scope>
    <source>
        <strain>YSH6000 / Serotype 2a</strain>
        <plasmid>pMYSH6000</plasmid>
    </source>
</reference>
<reference key="3">
    <citation type="journal article" date="2000" name="Mol. Microbiol.">
        <title>The virulence plasmid pWR100 and the repertoire of proteins secreted by the type III secretion apparatus of Shigella flexneri.</title>
        <authorList>
            <person name="Buchrieser C."/>
            <person name="Glaser P."/>
            <person name="Rusniok C."/>
            <person name="Nedjari H."/>
            <person name="d'Hauteville H."/>
            <person name="Kunst F."/>
            <person name="Sansonetti P.J."/>
            <person name="Parsot C."/>
        </authorList>
    </citation>
    <scope>NUCLEOTIDE SEQUENCE [GENOMIC DNA]</scope>
    <source>
        <strain>M90T / Serotype 5a</strain>
        <plasmid>pWR100</plasmid>
    </source>
</reference>
<reference key="4">
    <citation type="journal article" date="2001" name="Infect. Immun.">
        <title>Complete DNA sequence and analysis of the large virulence plasmid of Shigella flexneri.</title>
        <authorList>
            <person name="Venkatesan M.M."/>
            <person name="Goldberg M.B."/>
            <person name="Rose D.J."/>
            <person name="Grotbeck E.J."/>
            <person name="Burland V."/>
            <person name="Blattner F.R."/>
        </authorList>
    </citation>
    <scope>NUCLEOTIDE SEQUENCE [GENOMIC DNA]</scope>
    <source>
        <strain>M90T / Serotype 5a</strain>
        <plasmid>pWR501</plasmid>
    </source>
</reference>
<reference key="5">
    <citation type="journal article" date="2003" name="Infect. Immun.">
        <title>Comparison of two major forms of the Shigella virulence plasmid pINV: positive selection is a major force driving the divergence.</title>
        <authorList>
            <person name="Lan R."/>
            <person name="Stevenson G."/>
            <person name="Reeves P.R."/>
        </authorList>
    </citation>
    <scope>NUCLEOTIDE SEQUENCE [GENOMIC DNA]</scope>
    <source>
        <strain>M1382 / Serotype 6</strain>
        <plasmid>pINV_F6_M1382</plasmid>
    </source>
</reference>
<reference key="6">
    <citation type="journal article" date="2002" name="Nucleic Acids Res.">
        <title>Genome sequence of Shigella flexneri 2a: insights into pathogenicity through comparison with genomes of Escherichia coli K12 and O157.</title>
        <authorList>
            <person name="Jin Q."/>
            <person name="Yuan Z."/>
            <person name="Xu J."/>
            <person name="Wang Y."/>
            <person name="Shen Y."/>
            <person name="Lu W."/>
            <person name="Wang J."/>
            <person name="Liu H."/>
            <person name="Yang J."/>
            <person name="Yang F."/>
            <person name="Zhang X."/>
            <person name="Zhang J."/>
            <person name="Yang G."/>
            <person name="Wu H."/>
            <person name="Qu D."/>
            <person name="Dong J."/>
            <person name="Sun L."/>
            <person name="Xue Y."/>
            <person name="Zhao A."/>
            <person name="Gao Y."/>
            <person name="Zhu J."/>
            <person name="Kan B."/>
            <person name="Ding K."/>
            <person name="Chen S."/>
            <person name="Cheng H."/>
            <person name="Yao Z."/>
            <person name="He B."/>
            <person name="Chen R."/>
            <person name="Ma D."/>
            <person name="Qiang B."/>
            <person name="Wen Y."/>
            <person name="Hou Y."/>
            <person name="Yu J."/>
        </authorList>
    </citation>
    <scope>NUCLEOTIDE SEQUENCE [LARGE SCALE GENOMIC DNA]</scope>
    <source>
        <strain>301 / Serotype 2a</strain>
        <plasmid>pCP301</plasmid>
    </source>
</reference>
<reference key="7">
    <citation type="journal article" date="1988" name="Microb. Pathog.">
        <title>Nucleotide sequence of the invasion plasmid antigen B and C genes (ipaB and ipaC) of Shigella flexneri.</title>
        <authorList>
            <person name="Baudry B."/>
            <person name="Kaczorek M."/>
            <person name="Sansonetti P.J."/>
        </authorList>
    </citation>
    <scope>NUCLEOTIDE SEQUENCE [GENOMIC DNA] OF 1-259</scope>
    <source>
        <strain>M90T / Serotype 5a</strain>
        <plasmid>pWR100</plasmid>
    </source>
</reference>
<reference key="8">
    <citation type="journal article" date="1994" name="EMBO J.">
        <title>The secretion of the Shigella flexneri Ipa invasins is activated by epithelial cells and controlled by IpaB and IpaD.</title>
        <authorList>
            <person name="Menard R."/>
            <person name="Sansonetti P."/>
            <person name="Parsot C."/>
        </authorList>
    </citation>
    <scope>FUNCTION</scope>
    <source>
        <strain>M90T / Serotype 5a</strain>
        <plasmid>pWR100</plasmid>
    </source>
</reference>
<reference key="9">
    <citation type="journal article" date="2005" name="Infect. Immun.">
        <title>IpaD of Shigella flexneri is independently required for regulation of Ipa protein secretion and efficient insertion of IpaB and IpaC into host membranes.</title>
        <authorList>
            <person name="Picking W.L."/>
            <person name="Nishioka H."/>
            <person name="Hearn P.D."/>
            <person name="Baxter M.A."/>
            <person name="Harrington A.T."/>
            <person name="Blocker A."/>
            <person name="Picking W.D."/>
        </authorList>
    </citation>
    <scope>FUNCTION</scope>
    <scope>MUTAGENESIS OF 321-SER-CYS-322</scope>
    <source>
        <strain>M90T / Serotype 5a</strain>
        <plasmid>pWR100</plasmid>
    </source>
</reference>
<reference key="10">
    <citation type="journal article" date="2007" name="J. Biol. Chem.">
        <title>Self-chaperoning of the type III secretion system needle tip proteins IpaD and BipD.</title>
        <authorList>
            <person name="Johnson S."/>
            <person name="Roversi P."/>
            <person name="Espina M."/>
            <person name="Olive A."/>
            <person name="Deane J.E."/>
            <person name="Birket S."/>
            <person name="Field T."/>
            <person name="Picking W.D."/>
            <person name="Blocker A.J."/>
            <person name="Galyov E.E."/>
            <person name="Picking W.L."/>
            <person name="Lea S.M."/>
        </authorList>
    </citation>
    <scope>X-RAY CRYSTALLOGRAPHY (2.1 ANGSTROMS) OF 15-332</scope>
    <scope>SUBCELLULAR LOCATION</scope>
    <scope>MUTAGENESIS OF LYS-151 AND GLU-154</scope>
</reference>
<keyword id="KW-0002">3D-structure</keyword>
<keyword id="KW-0175">Coiled coil</keyword>
<keyword id="KW-0614">Plasmid</keyword>
<keyword id="KW-1185">Reference proteome</keyword>
<keyword id="KW-0964">Secreted</keyword>
<keyword id="KW-0843">Virulence</keyword>
<evidence type="ECO:0000255" key="1"/>
<evidence type="ECO:0000256" key="2">
    <source>
        <dbReference type="SAM" id="MobiDB-lite"/>
    </source>
</evidence>
<evidence type="ECO:0000269" key="3">
    <source>
    </source>
</evidence>
<evidence type="ECO:0000269" key="4">
    <source>
    </source>
</evidence>
<evidence type="ECO:0000269" key="5">
    <source>
    </source>
</evidence>
<evidence type="ECO:0000305" key="6"/>
<evidence type="ECO:0007829" key="7">
    <source>
        <dbReference type="PDB" id="2J0O"/>
    </source>
</evidence>
<evidence type="ECO:0007829" key="8">
    <source>
        <dbReference type="PDB" id="3R9V"/>
    </source>
</evidence>
<evidence type="ECO:0007829" key="9">
    <source>
        <dbReference type="PDB" id="5VXJ"/>
    </source>
</evidence>
<evidence type="ECO:0007829" key="10">
    <source>
        <dbReference type="PDB" id="5VXM"/>
    </source>
</evidence>
<evidence type="ECO:0007829" key="11">
    <source>
        <dbReference type="PDB" id="8V7Q"/>
    </source>
</evidence>
<comment type="function">
    <text evidence="3 5">Required for bacterial invasion of host cells. Controls IpaB and IpaC secretion, and the efficiency with which they are physically inserted into target cell membranes. These proteins are exported via T3SS to form a pore in the host membrane that allows the translocation of the other effectors into the host cytoplasm. Along with IpaB, is essential for both blocking secretion through the Mxi/Spa translocon in the absence of a secretion-inducing signal, and for controlling the level of secretion in the presence of this signal.</text>
</comment>
<comment type="subcellular location">
    <subcellularLocation>
        <location evidence="4">Secreted</location>
    </subcellularLocation>
    <text>Secreted via the type III secretion system (T3SS). Localizes to the tip of the external secretion needle that is part of the T3SS apparatus.</text>
</comment>
<comment type="induction">
    <text>Synthesis of this immunogen is repressed at 30 degrees Celsius and restored at 37 degrees Celsius.</text>
</comment>
<comment type="domain">
    <text>The N-terminal domain is an intra-molecular chaperone that prevents premature oligomerization of the residues on the coiled-coil region that are involved in interactions with the needle and/or itself. The residues in the C-terminal domain probably form oligomeric structures at the tip of the needle that are responsible for the regulation of secretion of other effectors.</text>
</comment>
<comment type="miscellaneous">
    <text>Deletion of amino acids 1-20 abolishes invasion activity, affects contact-mediated hemolysis activity and IpaD secretion. Deletion of amino acids 41-80 and 81-120 restores invasion activity to a higher level than wild-type and reduces contact-mediated hemolysis activity. Deletion beyond amino acid 120 reduces invasion activity and abolishes contact-mediated hemolysis activity.</text>
</comment>
<comment type="similarity">
    <text evidence="6">Belongs to the invasin protein D family.</text>
</comment>
<organism>
    <name type="scientific">Shigella flexneri</name>
    <dbReference type="NCBI Taxonomy" id="623"/>
    <lineage>
        <taxon>Bacteria</taxon>
        <taxon>Pseudomonadati</taxon>
        <taxon>Pseudomonadota</taxon>
        <taxon>Gammaproteobacteria</taxon>
        <taxon>Enterobacterales</taxon>
        <taxon>Enterobacteriaceae</taxon>
        <taxon>Shigella</taxon>
    </lineage>
</organism>
<proteinExistence type="evidence at protein level"/>
<gene>
    <name type="primary">ipaD</name>
    <name type="ordered locus">CP0126</name>
</gene>
<protein>
    <recommendedName>
        <fullName>Invasin IpaD</fullName>
    </recommendedName>
    <alternativeName>
        <fullName>36 kDa membrane antigen</fullName>
    </alternativeName>
</protein>
<sequence length="332" mass="36639">MNITTLTNSISTSSFSPNNTNGSSTETVNSDIKTTTSSHPVSSLTMLNDTLHNIRTTNQALKKELSQKTLTKTSLEEIALHSSQISMDVNKSAQLLDILSRNEYPINKDARELLHSAPKEAELDGDQMISHRELWAKIANSINDINEQYLKVYEHAVSSYTQMYQDFSAVLSSLAGWISPGGNDGNSVKLQVNSLKKALEELKEKYKDKPLYPANNTVSQEQANKWLTELGGTIGKVSQKNGGYVVSINMTPIDNMLKSLDNLGGNGEVVLDNAKYQAWNAGFSAEDETMKNNLQTLVQKYSNANSIFDNLVKVLSSTISSCTDTDKLFLHF</sequence>
<feature type="chain" id="PRO_0000219862" description="Invasin IpaD">
    <location>
        <begin position="1"/>
        <end position="332"/>
    </location>
</feature>
<feature type="region of interest" description="Disordered" evidence="2">
    <location>
        <begin position="1"/>
        <end position="43"/>
    </location>
</feature>
<feature type="region of interest" description="IpaB binding" evidence="6">
    <location>
        <begin position="192"/>
        <end position="267"/>
    </location>
</feature>
<feature type="coiled-coil region" evidence="1">
    <location>
        <begin position="44"/>
        <end position="77"/>
    </location>
</feature>
<feature type="compositionally biased region" description="Low complexity" evidence="2">
    <location>
        <begin position="1"/>
        <end position="25"/>
    </location>
</feature>
<feature type="compositionally biased region" description="Polar residues" evidence="2">
    <location>
        <begin position="26"/>
        <end position="43"/>
    </location>
</feature>
<feature type="sequence variant" description="In plasmid pINV_F6_M1382.">
    <original>E</original>
    <variation>D</variation>
    <location>
        <position position="64"/>
    </location>
</feature>
<feature type="sequence variant" description="In plasmid pINV_F6_M1382.">
    <original>RN</original>
    <variation>KK</variation>
    <location>
        <begin position="101"/>
        <end position="102"/>
    </location>
</feature>
<feature type="sequence variant" description="In plasmid pMYSH6000 and plasmid pCP301.">
    <original>N</original>
    <variation>H</variation>
    <location>
        <position position="102"/>
    </location>
</feature>
<feature type="sequence variant" description="In plasmid pINV_F6_M1382.">
    <original>DQ</original>
    <variation>YE</variation>
    <location>
        <begin position="126"/>
        <end position="127"/>
    </location>
</feature>
<feature type="sequence variant" description="In plasmid pINV_F6_M1382.">
    <original>A</original>
    <variation>D</variation>
    <location>
        <position position="136"/>
    </location>
</feature>
<feature type="sequence variant" description="In plasmid pINV_F6_M1382.">
    <original>N</original>
    <variation>K</variation>
    <location>
        <position position="140"/>
    </location>
</feature>
<feature type="sequence variant" description="In plasmid pINV_F6_M1382.">
    <original>D</original>
    <variation>N</variation>
    <location>
        <position position="144"/>
    </location>
</feature>
<feature type="sequence variant" description="In plasmid pINV_F6_M1382.">
    <original>N</original>
    <variation>K</variation>
    <location>
        <position position="193"/>
    </location>
</feature>
<feature type="sequence variant" description="In plasmid pINV_F6_M1382.">
    <original>KALEE</original>
    <variation>DELTK</variation>
    <location>
        <begin position="197"/>
        <end position="201"/>
    </location>
</feature>
<feature type="sequence variant" description="In plasmid pINV_F6_M1382.">
    <original>Q</original>
    <variation>K</variation>
    <location>
        <position position="220"/>
    </location>
</feature>
<feature type="sequence variant" description="In plasmid pINV_F6_M1382.">
    <original>Q</original>
    <variation>E</variation>
    <location>
        <position position="239"/>
    </location>
</feature>
<feature type="sequence variant" description="In plasmid pINV_F6_M1382.">
    <original>S</original>
    <variation>N</variation>
    <location>
        <position position="247"/>
    </location>
</feature>
<feature type="mutagenesis site" description="50% reduction in hemolytic activity; when associated with K-154." evidence="4">
    <original>K</original>
    <variation>E</variation>
    <location>
        <position position="151"/>
    </location>
</feature>
<feature type="mutagenesis site" description="50% reduction in hemolytic activity; when associated with E-151." evidence="4">
    <original>E</original>
    <variation>K</variation>
    <location>
        <position position="154"/>
    </location>
</feature>
<feature type="mutagenesis site" description="Restores invasion activity in a nonpolar ipaD mutant." evidence="3">
    <original>SC</original>
    <variation>AS</variation>
    <location>
        <begin position="321"/>
        <end position="322"/>
    </location>
</feature>
<feature type="helix" evidence="10">
    <location>
        <begin position="43"/>
        <end position="65"/>
    </location>
</feature>
<feature type="strand" evidence="10">
    <location>
        <begin position="67"/>
        <end position="69"/>
    </location>
</feature>
<feature type="helix" evidence="10">
    <location>
        <begin position="72"/>
        <end position="95"/>
    </location>
</feature>
<feature type="helix" evidence="10">
    <location>
        <begin position="111"/>
        <end position="114"/>
    </location>
</feature>
<feature type="helix" evidence="9">
    <location>
        <begin position="119"/>
        <end position="121"/>
    </location>
</feature>
<feature type="strand" evidence="8">
    <location>
        <begin position="128"/>
        <end position="130"/>
    </location>
</feature>
<feature type="helix" evidence="8">
    <location>
        <begin position="131"/>
        <end position="148"/>
    </location>
</feature>
<feature type="helix" evidence="8">
    <location>
        <begin position="150"/>
        <end position="174"/>
    </location>
</feature>
<feature type="helix" evidence="8">
    <location>
        <begin position="175"/>
        <end position="177"/>
    </location>
</feature>
<feature type="strand" evidence="8">
    <location>
        <begin position="178"/>
        <end position="190"/>
    </location>
</feature>
<feature type="helix" evidence="8">
    <location>
        <begin position="192"/>
        <end position="206"/>
    </location>
</feature>
<feature type="strand" evidence="11">
    <location>
        <begin position="207"/>
        <end position="209"/>
    </location>
</feature>
<feature type="strand" evidence="7">
    <location>
        <begin position="210"/>
        <end position="213"/>
    </location>
</feature>
<feature type="strand" evidence="8">
    <location>
        <begin position="214"/>
        <end position="216"/>
    </location>
</feature>
<feature type="helix" evidence="8">
    <location>
        <begin position="220"/>
        <end position="230"/>
    </location>
</feature>
<feature type="turn" evidence="8">
    <location>
        <begin position="232"/>
        <end position="234"/>
    </location>
</feature>
<feature type="strand" evidence="8">
    <location>
        <begin position="235"/>
        <end position="239"/>
    </location>
</feature>
<feature type="strand" evidence="8">
    <location>
        <begin position="241"/>
        <end position="248"/>
    </location>
</feature>
<feature type="helix" evidence="8">
    <location>
        <begin position="251"/>
        <end position="262"/>
    </location>
</feature>
<feature type="strand" evidence="8">
    <location>
        <begin position="265"/>
        <end position="267"/>
    </location>
</feature>
<feature type="strand" evidence="8">
    <location>
        <begin position="269"/>
        <end position="271"/>
    </location>
</feature>
<feature type="helix" evidence="8">
    <location>
        <begin position="273"/>
        <end position="317"/>
    </location>
</feature>
<geneLocation type="plasmid">
    <name>pWR100</name>
</geneLocation>
<geneLocation type="plasmid">
    <name>pWR501</name>
</geneLocation>
<geneLocation type="plasmid">
    <name>pMYSH6000</name>
</geneLocation>
<geneLocation type="plasmid">
    <name>pINV_F6_M1382</name>
</geneLocation>
<geneLocation type="plasmid">
    <name>pCP301</name>
</geneLocation>
<dbReference type="EMBL" id="J04117">
    <property type="protein sequence ID" value="AAA26524.1"/>
    <property type="molecule type" value="Genomic_DNA"/>
</dbReference>
<dbReference type="EMBL" id="X15319">
    <property type="protein sequence ID" value="CAA33383.1"/>
    <property type="molecule type" value="Genomic_DNA"/>
</dbReference>
<dbReference type="EMBL" id="AL391753">
    <property type="protein sequence ID" value="CAC05801.1"/>
    <property type="molecule type" value="Genomic_DNA"/>
</dbReference>
<dbReference type="EMBL" id="AF348706">
    <property type="protein sequence ID" value="AAK18444.1"/>
    <property type="molecule type" value="Genomic_DNA"/>
</dbReference>
<dbReference type="EMBL" id="AY206439">
    <property type="protein sequence ID" value="AAP78989.1"/>
    <property type="molecule type" value="Genomic_DNA"/>
</dbReference>
<dbReference type="EMBL" id="AF386526">
    <property type="protein sequence ID" value="AAL72350.1"/>
    <property type="molecule type" value="Genomic_DNA"/>
</dbReference>
<dbReference type="EMBL" id="M34849">
    <property type="protein sequence ID" value="AAA98426.1"/>
    <property type="molecule type" value="Genomic_DNA"/>
</dbReference>
<dbReference type="PIR" id="D31265">
    <property type="entry name" value="D31265"/>
</dbReference>
<dbReference type="RefSeq" id="NP_085288.1">
    <property type="nucleotide sequence ID" value="NC_002698.1"/>
</dbReference>
<dbReference type="RefSeq" id="NP_858259.1">
    <property type="nucleotide sequence ID" value="NC_004851.1"/>
</dbReference>
<dbReference type="RefSeq" id="WP_010921661.1">
    <property type="nucleotide sequence ID" value="NZ_QWST01000007.1"/>
</dbReference>
<dbReference type="RefSeq" id="YP_009062483.1">
    <property type="nucleotide sequence ID" value="NC_024996.1"/>
</dbReference>
<dbReference type="PDB" id="2J0N">
    <property type="method" value="X-ray"/>
    <property type="resolution" value="2.10 A"/>
    <property type="chains" value="A/B=133-332"/>
</dbReference>
<dbReference type="PDB" id="2J0O">
    <property type="method" value="X-ray"/>
    <property type="resolution" value="3.00 A"/>
    <property type="chains" value="A/B=15-332"/>
</dbReference>
<dbReference type="PDB" id="2JAA">
    <property type="method" value="X-ray"/>
    <property type="resolution" value="3.10 A"/>
    <property type="chains" value="A/B=121-332"/>
</dbReference>
<dbReference type="PDB" id="3R9V">
    <property type="method" value="X-ray"/>
    <property type="resolution" value="1.90 A"/>
    <property type="chains" value="A/B=39-322"/>
</dbReference>
<dbReference type="PDB" id="4D3E">
    <property type="method" value="EM"/>
    <property type="resolution" value="2.12 A"/>
    <property type="chains" value="D=125-332"/>
</dbReference>
<dbReference type="PDB" id="5VXJ">
    <property type="method" value="X-ray"/>
    <property type="resolution" value="2.50 A"/>
    <property type="chains" value="A/C/E/G/I=38-322"/>
</dbReference>
<dbReference type="PDB" id="5VXK">
    <property type="method" value="X-ray"/>
    <property type="resolution" value="2.55 A"/>
    <property type="chains" value="A=39-322"/>
</dbReference>
<dbReference type="PDB" id="5VXL">
    <property type="method" value="X-ray"/>
    <property type="resolution" value="2.80 A"/>
    <property type="chains" value="A=39-322"/>
</dbReference>
<dbReference type="PDB" id="5VXM">
    <property type="method" value="X-ray"/>
    <property type="resolution" value="2.05 A"/>
    <property type="chains" value="A=39-322"/>
</dbReference>
<dbReference type="PDB" id="8V5C">
    <property type="method" value="X-ray"/>
    <property type="resolution" value="1.96 A"/>
    <property type="chains" value="A/B=122-320"/>
</dbReference>
<dbReference type="PDB" id="8V5E">
    <property type="method" value="X-ray"/>
    <property type="resolution" value="2.20 A"/>
    <property type="chains" value="A/B=123-321"/>
</dbReference>
<dbReference type="PDB" id="8V7Q">
    <property type="method" value="X-ray"/>
    <property type="resolution" value="3.00 A"/>
    <property type="chains" value="A/B/C/D=123-321"/>
</dbReference>
<dbReference type="PDB" id="8V7S">
    <property type="method" value="X-ray"/>
    <property type="resolution" value="2.71 A"/>
    <property type="chains" value="A/B=122-321"/>
</dbReference>
<dbReference type="PDBsum" id="2J0N"/>
<dbReference type="PDBsum" id="2J0O"/>
<dbReference type="PDBsum" id="2JAA"/>
<dbReference type="PDBsum" id="3R9V"/>
<dbReference type="PDBsum" id="4D3E"/>
<dbReference type="PDBsum" id="5VXJ"/>
<dbReference type="PDBsum" id="5VXK"/>
<dbReference type="PDBsum" id="5VXL"/>
<dbReference type="PDBsum" id="5VXM"/>
<dbReference type="PDBsum" id="8V5C"/>
<dbReference type="PDBsum" id="8V5E"/>
<dbReference type="PDBsum" id="8V7Q"/>
<dbReference type="PDBsum" id="8V7S"/>
<dbReference type="SMR" id="P18013"/>
<dbReference type="TCDB" id="1.C.36.3.1">
    <property type="family name" value="the bacterial type iii-target cell pore (iiitcp) family"/>
</dbReference>
<dbReference type="PaxDb" id="198214-CP0126"/>
<dbReference type="ABCD" id="P18013">
    <property type="antibodies" value="4 sequenced antibodies"/>
</dbReference>
<dbReference type="GeneID" id="1238053"/>
<dbReference type="KEGG" id="sfl:CP0126"/>
<dbReference type="PATRIC" id="fig|198214.7.peg.5381"/>
<dbReference type="HOGENOM" id="CLU_069613_0_0_6"/>
<dbReference type="EvolutionaryTrace" id="P18013"/>
<dbReference type="PHI-base" id="PHI:7721"/>
<dbReference type="Proteomes" id="UP000001006">
    <property type="component" value="Plasmid pCP301"/>
</dbReference>
<dbReference type="GO" id="GO:0005576">
    <property type="term" value="C:extracellular region"/>
    <property type="evidence" value="ECO:0007669"/>
    <property type="project" value="UniProtKB-SubCell"/>
</dbReference>
<dbReference type="GO" id="GO:0034055">
    <property type="term" value="P:effector-mediated activation of host programmed cell death by symbiont"/>
    <property type="evidence" value="ECO:0000314"/>
    <property type="project" value="CACAO"/>
</dbReference>
<dbReference type="Gene3D" id="1.20.1710.10">
    <property type="entry name" value="IpaD-like"/>
    <property type="match status" value="1"/>
</dbReference>
<dbReference type="InterPro" id="IPR036708">
    <property type="entry name" value="BipD-like_sf"/>
</dbReference>
<dbReference type="InterPro" id="IPR009483">
    <property type="entry name" value="IpaD/BipD/SipD"/>
</dbReference>
<dbReference type="NCBIfam" id="TIGR02553">
    <property type="entry name" value="SipD_IpaD_SspD"/>
    <property type="match status" value="1"/>
</dbReference>
<dbReference type="Pfam" id="PF06511">
    <property type="entry name" value="T3SS_TC"/>
    <property type="match status" value="1"/>
</dbReference>
<dbReference type="SUPFAM" id="SSF140693">
    <property type="entry name" value="IpaD-like"/>
    <property type="match status" value="1"/>
</dbReference>
<accession>P18013</accession>
<accession>Q6XVZ1</accession>